<comment type="function">
    <text evidence="1">Catalyzes the phosphorylation of D-glycero-D-manno-heptose 7-phosphate at the C-1 position to selectively form D-glycero-beta-D-manno-heptose-1,7-bisphosphate.</text>
</comment>
<comment type="function">
    <text evidence="1">Catalyzes the ADP transfer from ATP to D-glycero-beta-D-manno-heptose 1-phosphate, yielding ADP-D-glycero-beta-D-manno-heptose.</text>
</comment>
<comment type="catalytic activity">
    <reaction evidence="1">
        <text>D-glycero-beta-D-manno-heptose 7-phosphate + ATP = D-glycero-beta-D-manno-heptose 1,7-bisphosphate + ADP + H(+)</text>
        <dbReference type="Rhea" id="RHEA:27473"/>
        <dbReference type="ChEBI" id="CHEBI:15378"/>
        <dbReference type="ChEBI" id="CHEBI:30616"/>
        <dbReference type="ChEBI" id="CHEBI:60204"/>
        <dbReference type="ChEBI" id="CHEBI:60208"/>
        <dbReference type="ChEBI" id="CHEBI:456216"/>
        <dbReference type="EC" id="2.7.1.167"/>
    </reaction>
</comment>
<comment type="catalytic activity">
    <reaction evidence="1">
        <text>D-glycero-beta-D-manno-heptose 1-phosphate + ATP + H(+) = ADP-D-glycero-beta-D-manno-heptose + diphosphate</text>
        <dbReference type="Rhea" id="RHEA:27465"/>
        <dbReference type="ChEBI" id="CHEBI:15378"/>
        <dbReference type="ChEBI" id="CHEBI:30616"/>
        <dbReference type="ChEBI" id="CHEBI:33019"/>
        <dbReference type="ChEBI" id="CHEBI:59967"/>
        <dbReference type="ChEBI" id="CHEBI:61593"/>
        <dbReference type="EC" id="2.7.7.70"/>
    </reaction>
</comment>
<comment type="pathway">
    <text evidence="1">Nucleotide-sugar biosynthesis; ADP-L-glycero-beta-D-manno-heptose biosynthesis; ADP-L-glycero-beta-D-manno-heptose from D-glycero-beta-D-manno-heptose 7-phosphate: step 1/4.</text>
</comment>
<comment type="pathway">
    <text evidence="1">Nucleotide-sugar biosynthesis; ADP-L-glycero-beta-D-manno-heptose biosynthesis; ADP-L-glycero-beta-D-manno-heptose from D-glycero-beta-D-manno-heptose 7-phosphate: step 3/4.</text>
</comment>
<comment type="subunit">
    <text evidence="1">Homodimer.</text>
</comment>
<comment type="similarity">
    <text evidence="1">In the N-terminal section; belongs to the carbohydrate kinase PfkB family.</text>
</comment>
<comment type="similarity">
    <text evidence="1">In the C-terminal section; belongs to the cytidylyltransferase family.</text>
</comment>
<evidence type="ECO:0000255" key="1">
    <source>
        <dbReference type="HAMAP-Rule" id="MF_01603"/>
    </source>
</evidence>
<dbReference type="EC" id="2.7.1.167" evidence="1"/>
<dbReference type="EC" id="2.7.7.70" evidence="1"/>
<dbReference type="EMBL" id="CP000482">
    <property type="protein sequence ID" value="ABL01183.1"/>
    <property type="molecule type" value="Genomic_DNA"/>
</dbReference>
<dbReference type="RefSeq" id="WP_011737396.1">
    <property type="nucleotide sequence ID" value="NC_008609.1"/>
</dbReference>
<dbReference type="SMR" id="A1AV12"/>
<dbReference type="STRING" id="338966.Ppro_3591"/>
<dbReference type="KEGG" id="ppd:Ppro_3591"/>
<dbReference type="eggNOG" id="COG0615">
    <property type="taxonomic scope" value="Bacteria"/>
</dbReference>
<dbReference type="eggNOG" id="COG2870">
    <property type="taxonomic scope" value="Bacteria"/>
</dbReference>
<dbReference type="HOGENOM" id="CLU_021150_2_1_7"/>
<dbReference type="OrthoDB" id="9802794at2"/>
<dbReference type="UniPathway" id="UPA00356">
    <property type="reaction ID" value="UER00437"/>
</dbReference>
<dbReference type="UniPathway" id="UPA00356">
    <property type="reaction ID" value="UER00439"/>
</dbReference>
<dbReference type="Proteomes" id="UP000006732">
    <property type="component" value="Chromosome"/>
</dbReference>
<dbReference type="GO" id="GO:0005829">
    <property type="term" value="C:cytosol"/>
    <property type="evidence" value="ECO:0007669"/>
    <property type="project" value="TreeGrafter"/>
</dbReference>
<dbReference type="GO" id="GO:0005524">
    <property type="term" value="F:ATP binding"/>
    <property type="evidence" value="ECO:0007669"/>
    <property type="project" value="UniProtKB-UniRule"/>
</dbReference>
<dbReference type="GO" id="GO:0033785">
    <property type="term" value="F:heptose 7-phosphate kinase activity"/>
    <property type="evidence" value="ECO:0007669"/>
    <property type="project" value="UniProtKB-UniRule"/>
</dbReference>
<dbReference type="GO" id="GO:0033786">
    <property type="term" value="F:heptose-1-phosphate adenylyltransferase activity"/>
    <property type="evidence" value="ECO:0007669"/>
    <property type="project" value="UniProtKB-UniRule"/>
</dbReference>
<dbReference type="GO" id="GO:0016773">
    <property type="term" value="F:phosphotransferase activity, alcohol group as acceptor"/>
    <property type="evidence" value="ECO:0007669"/>
    <property type="project" value="InterPro"/>
</dbReference>
<dbReference type="GO" id="GO:0097171">
    <property type="term" value="P:ADP-L-glycero-beta-D-manno-heptose biosynthetic process"/>
    <property type="evidence" value="ECO:0007669"/>
    <property type="project" value="UniProtKB-UniPathway"/>
</dbReference>
<dbReference type="CDD" id="cd01172">
    <property type="entry name" value="RfaE_like"/>
    <property type="match status" value="1"/>
</dbReference>
<dbReference type="FunFam" id="3.40.1190.20:FF:000002">
    <property type="entry name" value="Bifunctional protein HldE"/>
    <property type="match status" value="1"/>
</dbReference>
<dbReference type="Gene3D" id="3.40.1190.20">
    <property type="match status" value="1"/>
</dbReference>
<dbReference type="Gene3D" id="3.40.50.620">
    <property type="entry name" value="HUPs"/>
    <property type="match status" value="1"/>
</dbReference>
<dbReference type="HAMAP" id="MF_01603">
    <property type="entry name" value="HldE"/>
    <property type="match status" value="1"/>
</dbReference>
<dbReference type="InterPro" id="IPR023030">
    <property type="entry name" value="Bifunc_HldE"/>
</dbReference>
<dbReference type="InterPro" id="IPR004821">
    <property type="entry name" value="Cyt_trans-like"/>
</dbReference>
<dbReference type="InterPro" id="IPR011611">
    <property type="entry name" value="PfkB_dom"/>
</dbReference>
<dbReference type="InterPro" id="IPR011913">
    <property type="entry name" value="RfaE_dom_I"/>
</dbReference>
<dbReference type="InterPro" id="IPR011914">
    <property type="entry name" value="RfaE_dom_II"/>
</dbReference>
<dbReference type="InterPro" id="IPR029056">
    <property type="entry name" value="Ribokinase-like"/>
</dbReference>
<dbReference type="InterPro" id="IPR014729">
    <property type="entry name" value="Rossmann-like_a/b/a_fold"/>
</dbReference>
<dbReference type="NCBIfam" id="TIGR00125">
    <property type="entry name" value="cyt_tran_rel"/>
    <property type="match status" value="1"/>
</dbReference>
<dbReference type="NCBIfam" id="NF008454">
    <property type="entry name" value="PRK11316.1"/>
    <property type="match status" value="1"/>
</dbReference>
<dbReference type="NCBIfam" id="TIGR02198">
    <property type="entry name" value="rfaE_dom_I"/>
    <property type="match status" value="1"/>
</dbReference>
<dbReference type="NCBIfam" id="TIGR02199">
    <property type="entry name" value="rfaE_dom_II"/>
    <property type="match status" value="1"/>
</dbReference>
<dbReference type="PANTHER" id="PTHR46969">
    <property type="entry name" value="BIFUNCTIONAL PROTEIN HLDE"/>
    <property type="match status" value="1"/>
</dbReference>
<dbReference type="PANTHER" id="PTHR46969:SF1">
    <property type="entry name" value="BIFUNCTIONAL PROTEIN HLDE"/>
    <property type="match status" value="1"/>
</dbReference>
<dbReference type="Pfam" id="PF01467">
    <property type="entry name" value="CTP_transf_like"/>
    <property type="match status" value="1"/>
</dbReference>
<dbReference type="Pfam" id="PF00294">
    <property type="entry name" value="PfkB"/>
    <property type="match status" value="1"/>
</dbReference>
<dbReference type="SUPFAM" id="SSF52374">
    <property type="entry name" value="Nucleotidylyl transferase"/>
    <property type="match status" value="1"/>
</dbReference>
<dbReference type="SUPFAM" id="SSF53613">
    <property type="entry name" value="Ribokinase-like"/>
    <property type="match status" value="1"/>
</dbReference>
<name>HLDE_PELPD</name>
<reference key="1">
    <citation type="submission" date="2006-10" db="EMBL/GenBank/DDBJ databases">
        <title>Complete sequence of chromosome of Pelobacter propionicus DSM 2379.</title>
        <authorList>
            <consortium name="US DOE Joint Genome Institute"/>
            <person name="Copeland A."/>
            <person name="Lucas S."/>
            <person name="Lapidus A."/>
            <person name="Barry K."/>
            <person name="Detter J.C."/>
            <person name="Glavina del Rio T."/>
            <person name="Hammon N."/>
            <person name="Israni S."/>
            <person name="Dalin E."/>
            <person name="Tice H."/>
            <person name="Pitluck S."/>
            <person name="Saunders E."/>
            <person name="Brettin T."/>
            <person name="Bruce D."/>
            <person name="Han C."/>
            <person name="Tapia R."/>
            <person name="Schmutz J."/>
            <person name="Larimer F."/>
            <person name="Land M."/>
            <person name="Hauser L."/>
            <person name="Kyrpides N."/>
            <person name="Kim E."/>
            <person name="Lovley D."/>
            <person name="Richardson P."/>
        </authorList>
    </citation>
    <scope>NUCLEOTIDE SEQUENCE [LARGE SCALE GENOMIC DNA]</scope>
    <source>
        <strain>DSM 2379 / NBRC 103807 / OttBd1</strain>
    </source>
</reference>
<sequence>MDRKSIESIFNRIRTANCLVIGDLMLDEYLWGKAERISPEAPVQVVDVVREEMRLGGAGNVVNNLVELGAEVTVCSVVGDDDNGQALLEAFGRRGVATDAIFLDATRRTSRKTRVVAAHQQIVRIDRESRVPLSAEVERRVSDWITANAGGFDVILLSDYQKGVLTPGVISATLAAARPGAIPVLVDPKGTDFSRYSGATLLTPNRREAEAASGIAIHDIESLVRAAGVIMERVGLEHLLITRSEEGMSLFSRSAAPMHIPTVAREVFDVSGAGDTVLASLAAGMAAGMEMIEAARLANITAGIAVAKLGTSTVAPAEIINAVALAHSDSDSKIKNRDVLAVLIEAEKARGKRIVFTNGCFDLLHAGHVKYLQKARTLGDLLVLGLNSDASVRRLKGEKRPLIGEQERAHILAALDCIDYVVIFEEDTPLELIAALKPHILAKGGDYTPEGVVGRELVESYGGRVELVSFVDGKSTTNIIERVLERYS</sequence>
<gene>
    <name evidence="1" type="primary">hldE</name>
    <name type="ordered locus">Ppro_3591</name>
</gene>
<accession>A1AV12</accession>
<feature type="chain" id="PRO_0000291680" description="Bifunctional protein HldE">
    <location>
        <begin position="1"/>
        <end position="488"/>
    </location>
</feature>
<feature type="region of interest" description="Ribokinase">
    <location>
        <begin position="1"/>
        <end position="330"/>
    </location>
</feature>
<feature type="region of interest" description="Cytidylyltransferase">
    <location>
        <begin position="356"/>
        <end position="488"/>
    </location>
</feature>
<feature type="active site" evidence="1">
    <location>
        <position position="275"/>
    </location>
</feature>
<feature type="binding site" evidence="1">
    <location>
        <begin position="205"/>
        <end position="208"/>
    </location>
    <ligand>
        <name>ATP</name>
        <dbReference type="ChEBI" id="CHEBI:30616"/>
    </ligand>
</feature>
<keyword id="KW-0067">ATP-binding</keyword>
<keyword id="KW-0119">Carbohydrate metabolism</keyword>
<keyword id="KW-0418">Kinase</keyword>
<keyword id="KW-0511">Multifunctional enzyme</keyword>
<keyword id="KW-0547">Nucleotide-binding</keyword>
<keyword id="KW-0548">Nucleotidyltransferase</keyword>
<keyword id="KW-1185">Reference proteome</keyword>
<keyword id="KW-0808">Transferase</keyword>
<organism>
    <name type="scientific">Pelobacter propionicus (strain DSM 2379 / NBRC 103807 / OttBd1)</name>
    <dbReference type="NCBI Taxonomy" id="338966"/>
    <lineage>
        <taxon>Bacteria</taxon>
        <taxon>Pseudomonadati</taxon>
        <taxon>Thermodesulfobacteriota</taxon>
        <taxon>Desulfuromonadia</taxon>
        <taxon>Desulfuromonadales</taxon>
        <taxon>Desulfuromonadaceae</taxon>
        <taxon>Pelobacter</taxon>
    </lineage>
</organism>
<protein>
    <recommendedName>
        <fullName evidence="1">Bifunctional protein HldE</fullName>
    </recommendedName>
    <domain>
        <recommendedName>
            <fullName evidence="1">D-beta-D-heptose 7-phosphate kinase</fullName>
            <ecNumber evidence="1">2.7.1.167</ecNumber>
        </recommendedName>
        <alternativeName>
            <fullName evidence="1">D-beta-D-heptose 7-phosphotransferase</fullName>
        </alternativeName>
        <alternativeName>
            <fullName evidence="1">D-glycero-beta-D-manno-heptose-7-phosphate kinase</fullName>
        </alternativeName>
    </domain>
    <domain>
        <recommendedName>
            <fullName evidence="1">D-beta-D-heptose 1-phosphate adenylyltransferase</fullName>
            <ecNumber evidence="1">2.7.7.70</ecNumber>
        </recommendedName>
        <alternativeName>
            <fullName evidence="1">D-glycero-beta-D-manno-heptose 1-phosphate adenylyltransferase</fullName>
        </alternativeName>
    </domain>
</protein>
<proteinExistence type="inferred from homology"/>